<organism>
    <name type="scientific">Aspergillus flavus (strain ATCC 200026 / FGSC A1120 / IAM 13836 / NRRL 3357 / JCM 12722 / SRRC 167)</name>
    <dbReference type="NCBI Taxonomy" id="332952"/>
    <lineage>
        <taxon>Eukaryota</taxon>
        <taxon>Fungi</taxon>
        <taxon>Dikarya</taxon>
        <taxon>Ascomycota</taxon>
        <taxon>Pezizomycotina</taxon>
        <taxon>Eurotiomycetes</taxon>
        <taxon>Eurotiomycetidae</taxon>
        <taxon>Eurotiales</taxon>
        <taxon>Aspergillaceae</taxon>
        <taxon>Aspergillus</taxon>
        <taxon>Aspergillus subgen. Circumdati</taxon>
    </lineage>
</organism>
<comment type="function">
    <text evidence="3 6">MFS-type transporter; part of the lnb gene cluster that mediates the biosynthesis of diastereomeric piperazines. Lna and lnb clusters encode sets of enzymes that produce overlapping sets of previously undescribed metabolites such as piperazinomycin-like metabolites or morpholine (PubMed:23281040). The lna and lnb biosynthetic pathways appear to be part of a signaling network that controls the formation of sclerotia, a resilient overwintering structure (PubMed:23281040). May be involved in the secretion of the metabolites produced by the lna and lnb clusters (Probable).</text>
</comment>
<comment type="subcellular location">
    <subcellularLocation>
        <location evidence="5">Cell membrane</location>
        <topology evidence="1">Multi-pass membrane protein</topology>
    </subcellularLocation>
</comment>
<comment type="similarity">
    <text evidence="5">Belongs to the major facilitator superfamily. TCR/Tet family.</text>
</comment>
<reference key="1">
    <citation type="journal article" date="2015" name="Genome Announc.">
        <title>Genome sequence of Aspergillus flavus NRRL 3357, a strain that causes aflatoxin contamination of food and feed.</title>
        <authorList>
            <person name="Nierman W.C."/>
            <person name="Yu J."/>
            <person name="Fedorova-Abrams N.D."/>
            <person name="Losada L."/>
            <person name="Cleveland T.E."/>
            <person name="Bhatnagar D."/>
            <person name="Bennett J.W."/>
            <person name="Dean R."/>
            <person name="Payne G.A."/>
        </authorList>
    </citation>
    <scope>NUCLEOTIDE SEQUENCE [LARGE SCALE GENOMIC DNA]</scope>
    <source>
        <strain>ATCC 200026 / FGSC A1120 / IAM 13836 / NRRL 3357 / JCM 12722 / SRRC 167</strain>
    </source>
</reference>
<reference key="2">
    <citation type="journal article" date="2013" name="Angew. Chem. Int. Ed.">
        <title>Homologous NRPS-like gene clusters mediate redundant small-molecule biosynthesis in Aspergillus flavus.</title>
        <authorList>
            <person name="Forseth R.R."/>
            <person name="Amaike S."/>
            <person name="Schwenk D."/>
            <person name="Affeldt K.J."/>
            <person name="Hoffmeister D."/>
            <person name="Schroeder F.C."/>
            <person name="Keller N.P."/>
        </authorList>
    </citation>
    <scope>IDENTIFICATION</scope>
    <scope>FUNCTION</scope>
    <scope>PATHWAY</scope>
</reference>
<dbReference type="EMBL" id="EQ963485">
    <property type="protein sequence ID" value="EED45925.1"/>
    <property type="molecule type" value="Genomic_DNA"/>
</dbReference>
<dbReference type="RefSeq" id="XP_002384861.1">
    <property type="nucleotide sequence ID" value="XM_002384820.1"/>
</dbReference>
<dbReference type="SMR" id="B8NWW7"/>
<dbReference type="GlyCosmos" id="B8NWW7">
    <property type="glycosylation" value="1 site, No reported glycans"/>
</dbReference>
<dbReference type="EnsemblFungi" id="EED45925">
    <property type="protein sequence ID" value="EED45925"/>
    <property type="gene ID" value="AFLA_121540"/>
</dbReference>
<dbReference type="VEuPathDB" id="FungiDB:AFLA_014157"/>
<dbReference type="eggNOG" id="KOG0254">
    <property type="taxonomic scope" value="Eukaryota"/>
</dbReference>
<dbReference type="HOGENOM" id="CLU_000960_22_1_1"/>
<dbReference type="OMA" id="NDARAVW"/>
<dbReference type="GO" id="GO:0005886">
    <property type="term" value="C:plasma membrane"/>
    <property type="evidence" value="ECO:0007669"/>
    <property type="project" value="UniProtKB-SubCell"/>
</dbReference>
<dbReference type="GO" id="GO:0022857">
    <property type="term" value="F:transmembrane transporter activity"/>
    <property type="evidence" value="ECO:0007669"/>
    <property type="project" value="InterPro"/>
</dbReference>
<dbReference type="CDD" id="cd17502">
    <property type="entry name" value="MFS_Azr1_MDR_like"/>
    <property type="match status" value="1"/>
</dbReference>
<dbReference type="FunFam" id="1.20.1250.20:FF:000196">
    <property type="entry name" value="MFS toxin efflux pump (AflT)"/>
    <property type="match status" value="1"/>
</dbReference>
<dbReference type="Gene3D" id="1.20.1250.20">
    <property type="entry name" value="MFS general substrate transporter like domains"/>
    <property type="match status" value="1"/>
</dbReference>
<dbReference type="Gene3D" id="1.20.1720.10">
    <property type="entry name" value="Multidrug resistance protein D"/>
    <property type="match status" value="1"/>
</dbReference>
<dbReference type="InterPro" id="IPR011701">
    <property type="entry name" value="MFS"/>
</dbReference>
<dbReference type="InterPro" id="IPR020846">
    <property type="entry name" value="MFS_dom"/>
</dbReference>
<dbReference type="InterPro" id="IPR036259">
    <property type="entry name" value="MFS_trans_sf"/>
</dbReference>
<dbReference type="PANTHER" id="PTHR23501">
    <property type="entry name" value="MAJOR FACILITATOR SUPERFAMILY"/>
    <property type="match status" value="1"/>
</dbReference>
<dbReference type="PANTHER" id="PTHR23501:SF199">
    <property type="entry name" value="MFS EFFLUX TRANSPORTER INPD-RELATED"/>
    <property type="match status" value="1"/>
</dbReference>
<dbReference type="Pfam" id="PF07690">
    <property type="entry name" value="MFS_1"/>
    <property type="match status" value="1"/>
</dbReference>
<dbReference type="SUPFAM" id="SSF103473">
    <property type="entry name" value="MFS general substrate transporter"/>
    <property type="match status" value="1"/>
</dbReference>
<dbReference type="PROSITE" id="PS50850">
    <property type="entry name" value="MFS"/>
    <property type="match status" value="1"/>
</dbReference>
<proteinExistence type="inferred from homology"/>
<gene>
    <name evidence="4" type="primary">lnaF</name>
    <name type="ORF">AFLA_121540</name>
</gene>
<name>LNBF_ASPFN</name>
<keyword id="KW-1003">Cell membrane</keyword>
<keyword id="KW-0325">Glycoprotein</keyword>
<keyword id="KW-0472">Membrane</keyword>
<keyword id="KW-0812">Transmembrane</keyword>
<keyword id="KW-1133">Transmembrane helix</keyword>
<keyword id="KW-0813">Transport</keyword>
<feature type="chain" id="PRO_0000446084" description="MFS-type transporter lnaF">
    <location>
        <begin position="1"/>
        <end position="479"/>
    </location>
</feature>
<feature type="transmembrane region" description="Helical" evidence="1">
    <location>
        <begin position="47"/>
        <end position="67"/>
    </location>
</feature>
<feature type="transmembrane region" description="Helical" evidence="1">
    <location>
        <begin position="71"/>
        <end position="91"/>
    </location>
</feature>
<feature type="transmembrane region" description="Helical" evidence="1">
    <location>
        <begin position="104"/>
        <end position="124"/>
    </location>
</feature>
<feature type="transmembrane region" description="Helical" evidence="1">
    <location>
        <begin position="136"/>
        <end position="156"/>
    </location>
</feature>
<feature type="transmembrane region" description="Helical" evidence="1">
    <location>
        <begin position="177"/>
        <end position="197"/>
    </location>
</feature>
<feature type="transmembrane region" description="Helical" evidence="1">
    <location>
        <begin position="208"/>
        <end position="228"/>
    </location>
</feature>
<feature type="transmembrane region" description="Helical" evidence="1">
    <location>
        <begin position="250"/>
        <end position="270"/>
    </location>
</feature>
<feature type="transmembrane region" description="Helical" evidence="1">
    <location>
        <begin position="283"/>
        <end position="303"/>
    </location>
</feature>
<feature type="transmembrane region" description="Helical" evidence="1">
    <location>
        <begin position="306"/>
        <end position="326"/>
    </location>
</feature>
<feature type="transmembrane region" description="Helical" evidence="1">
    <location>
        <begin position="344"/>
        <end position="364"/>
    </location>
</feature>
<feature type="transmembrane region" description="Helical" evidence="1">
    <location>
        <begin position="372"/>
        <end position="392"/>
    </location>
</feature>
<feature type="transmembrane region" description="Helical" evidence="1">
    <location>
        <begin position="442"/>
        <end position="462"/>
    </location>
</feature>
<feature type="glycosylation site" description="N-linked (GlcNAc...) asparagine" evidence="2">
    <location>
        <position position="416"/>
    </location>
</feature>
<evidence type="ECO:0000255" key="1"/>
<evidence type="ECO:0000255" key="2">
    <source>
        <dbReference type="PROSITE-ProRule" id="PRU00498"/>
    </source>
</evidence>
<evidence type="ECO:0000269" key="3">
    <source>
    </source>
</evidence>
<evidence type="ECO:0000303" key="4">
    <source>
    </source>
</evidence>
<evidence type="ECO:0000305" key="5"/>
<evidence type="ECO:0000305" key="6">
    <source>
    </source>
</evidence>
<sequence length="479" mass="51372">MATAIPKITDQFHSAQDIGWYGSSYLLTNSCLTISFGKLYTLYPVKWIYLVALALFEIGSLVCGFTPNSVGLIIGRAITGLGSAGLFSGAITVISQSMPLQRRLLCISVIMCLFGVADVAGPLIGGVFTDYLTWRWCFYINLPFGGLTALAIVFLLEAQQPVKQAGGIKCLLSHLDLVGLLFLFPAVICLLLVLSWGGADYPWDDRRIIGLIVGFTALILVFIVVQWWKQDKATVPPRLIKKRDIWGTSIFSFCITGAMMAFTYHLPIWFQSVKGVSATKSGLMSIPTILGMTICSLLSAVLVGKIGFYTPFMYAAPVLSVIGAGLLSTLKVDSGPAQWIGYQIPFGIGLGIGLSQPMVVVQAVLEPDDIPLAIAITAFMESLGGSVAISVAQSVFRSQLVKNMALEAPQANAHGNITTAMTTLRDTVPPEMLSGVLRAYNLAITQALYVGVALSSLAIVGALPIRWTSVNEKKTEGCP</sequence>
<accession>B8NWW7</accession>
<protein>
    <recommendedName>
        <fullName evidence="4">MFS-type transporter lnaF</fullName>
    </recommendedName>
    <alternativeName>
        <fullName evidence="4">Lnb diastereomeric piperazines biosynthesis cluster protein F</fullName>
    </alternativeName>
</protein>